<sequence length="221" mass="24939">MDDELTLLPREKMLSFGITSLTDAELLALFLRTGTSGKSVFVLAQELLQHFGSLHGLLNANLDEFRYVEGIGLAKYAQLKGIAELARRYHSVRVLGDNPLLSPEMTKDFLQSQLSDAEREVFMVIFLDNQHRVVKHSRMFSGTLRHVEVHPREIVREAIKVNAAAVILAHNHPSGCAEPSKADKDITERIIKCCQFMDIHVLDHFIIGRGEYVSFAEQGWI</sequence>
<comment type="similarity">
    <text evidence="1">Belongs to the UPF0758 family. YicR subfamily.</text>
</comment>
<reference key="1">
    <citation type="journal article" date="2010" name="PLoS Genet.">
        <title>Genome sequence of the plant growth promoting endophytic bacterium Enterobacter sp. 638.</title>
        <authorList>
            <person name="Taghavi S."/>
            <person name="van der Lelie D."/>
            <person name="Hoffman A."/>
            <person name="Zhang Y.B."/>
            <person name="Walla M.D."/>
            <person name="Vangronsveld J."/>
            <person name="Newman L."/>
            <person name="Monchy S."/>
        </authorList>
    </citation>
    <scope>NUCLEOTIDE SEQUENCE [LARGE SCALE GENOMIC DNA]</scope>
    <source>
        <strain>638</strain>
    </source>
</reference>
<keyword id="KW-0378">Hydrolase</keyword>
<keyword id="KW-0479">Metal-binding</keyword>
<keyword id="KW-0482">Metalloprotease</keyword>
<keyword id="KW-0645">Protease</keyword>
<keyword id="KW-0862">Zinc</keyword>
<evidence type="ECO:0000255" key="1">
    <source>
        <dbReference type="HAMAP-Rule" id="MF_00018"/>
    </source>
</evidence>
<evidence type="ECO:0000255" key="2">
    <source>
        <dbReference type="PROSITE-ProRule" id="PRU01182"/>
    </source>
</evidence>
<gene>
    <name type="ordered locus">Ent638_0101</name>
</gene>
<feature type="chain" id="PRO_1000057162" description="UPF0758 protein Ent638_0101">
    <location>
        <begin position="1"/>
        <end position="221"/>
    </location>
</feature>
<feature type="domain" description="MPN" evidence="2">
    <location>
        <begin position="99"/>
        <end position="221"/>
    </location>
</feature>
<feature type="short sequence motif" description="JAMM motif" evidence="2">
    <location>
        <begin position="170"/>
        <end position="183"/>
    </location>
</feature>
<feature type="binding site" evidence="2">
    <location>
        <position position="170"/>
    </location>
    <ligand>
        <name>Zn(2+)</name>
        <dbReference type="ChEBI" id="CHEBI:29105"/>
        <note>catalytic</note>
    </ligand>
</feature>
<feature type="binding site" evidence="2">
    <location>
        <position position="172"/>
    </location>
    <ligand>
        <name>Zn(2+)</name>
        <dbReference type="ChEBI" id="CHEBI:29105"/>
        <note>catalytic</note>
    </ligand>
</feature>
<feature type="binding site" evidence="2">
    <location>
        <position position="183"/>
    </location>
    <ligand>
        <name>Zn(2+)</name>
        <dbReference type="ChEBI" id="CHEBI:29105"/>
        <note>catalytic</note>
    </ligand>
</feature>
<dbReference type="EMBL" id="CP000653">
    <property type="protein sequence ID" value="ABP58791.1"/>
    <property type="molecule type" value="Genomic_DNA"/>
</dbReference>
<dbReference type="RefSeq" id="WP_011915369.1">
    <property type="nucleotide sequence ID" value="NC_009436.1"/>
</dbReference>
<dbReference type="SMR" id="A4W511"/>
<dbReference type="STRING" id="399742.Ent638_0101"/>
<dbReference type="KEGG" id="ent:Ent638_0101"/>
<dbReference type="eggNOG" id="COG2003">
    <property type="taxonomic scope" value="Bacteria"/>
</dbReference>
<dbReference type="HOGENOM" id="CLU_073529_0_1_6"/>
<dbReference type="OrthoDB" id="9804482at2"/>
<dbReference type="Proteomes" id="UP000000230">
    <property type="component" value="Chromosome"/>
</dbReference>
<dbReference type="GO" id="GO:0046872">
    <property type="term" value="F:metal ion binding"/>
    <property type="evidence" value="ECO:0007669"/>
    <property type="project" value="UniProtKB-KW"/>
</dbReference>
<dbReference type="GO" id="GO:0008237">
    <property type="term" value="F:metallopeptidase activity"/>
    <property type="evidence" value="ECO:0007669"/>
    <property type="project" value="UniProtKB-KW"/>
</dbReference>
<dbReference type="GO" id="GO:0006508">
    <property type="term" value="P:proteolysis"/>
    <property type="evidence" value="ECO:0007669"/>
    <property type="project" value="UniProtKB-KW"/>
</dbReference>
<dbReference type="CDD" id="cd08071">
    <property type="entry name" value="MPN_DUF2466"/>
    <property type="match status" value="1"/>
</dbReference>
<dbReference type="Gene3D" id="1.10.150.20">
    <property type="entry name" value="5' to 3' exonuclease, C-terminal subdomain"/>
    <property type="match status" value="1"/>
</dbReference>
<dbReference type="Gene3D" id="3.40.140.10">
    <property type="entry name" value="Cytidine Deaminase, domain 2"/>
    <property type="match status" value="1"/>
</dbReference>
<dbReference type="HAMAP" id="MF_00018">
    <property type="entry name" value="UPF0758_YicR"/>
    <property type="match status" value="1"/>
</dbReference>
<dbReference type="InterPro" id="IPR037518">
    <property type="entry name" value="MPN"/>
</dbReference>
<dbReference type="InterPro" id="IPR025657">
    <property type="entry name" value="RadC_JAB"/>
</dbReference>
<dbReference type="InterPro" id="IPR010994">
    <property type="entry name" value="RuvA_2-like"/>
</dbReference>
<dbReference type="InterPro" id="IPR001405">
    <property type="entry name" value="UPF0758"/>
</dbReference>
<dbReference type="InterPro" id="IPR020891">
    <property type="entry name" value="UPF0758_CS"/>
</dbReference>
<dbReference type="InterPro" id="IPR046778">
    <property type="entry name" value="UPF0758_N"/>
</dbReference>
<dbReference type="InterPro" id="IPR022820">
    <property type="entry name" value="UPF0758_YicR"/>
</dbReference>
<dbReference type="NCBIfam" id="NF000642">
    <property type="entry name" value="PRK00024.1"/>
    <property type="match status" value="1"/>
</dbReference>
<dbReference type="NCBIfam" id="TIGR00608">
    <property type="entry name" value="radc"/>
    <property type="match status" value="1"/>
</dbReference>
<dbReference type="PANTHER" id="PTHR30471">
    <property type="entry name" value="DNA REPAIR PROTEIN RADC"/>
    <property type="match status" value="1"/>
</dbReference>
<dbReference type="PANTHER" id="PTHR30471:SF3">
    <property type="entry name" value="UPF0758 PROTEIN YEES-RELATED"/>
    <property type="match status" value="1"/>
</dbReference>
<dbReference type="Pfam" id="PF04002">
    <property type="entry name" value="RadC"/>
    <property type="match status" value="1"/>
</dbReference>
<dbReference type="Pfam" id="PF20582">
    <property type="entry name" value="UPF0758_N"/>
    <property type="match status" value="1"/>
</dbReference>
<dbReference type="SUPFAM" id="SSF47781">
    <property type="entry name" value="RuvA domain 2-like"/>
    <property type="match status" value="1"/>
</dbReference>
<dbReference type="PROSITE" id="PS50249">
    <property type="entry name" value="MPN"/>
    <property type="match status" value="1"/>
</dbReference>
<dbReference type="PROSITE" id="PS01302">
    <property type="entry name" value="UPF0758"/>
    <property type="match status" value="1"/>
</dbReference>
<accession>A4W511</accession>
<proteinExistence type="inferred from homology"/>
<name>Y101_ENT38</name>
<organism>
    <name type="scientific">Enterobacter sp. (strain 638)</name>
    <dbReference type="NCBI Taxonomy" id="399742"/>
    <lineage>
        <taxon>Bacteria</taxon>
        <taxon>Pseudomonadati</taxon>
        <taxon>Pseudomonadota</taxon>
        <taxon>Gammaproteobacteria</taxon>
        <taxon>Enterobacterales</taxon>
        <taxon>Enterobacteriaceae</taxon>
        <taxon>Enterobacter</taxon>
    </lineage>
</organism>
<protein>
    <recommendedName>
        <fullName evidence="1">UPF0758 protein Ent638_0101</fullName>
    </recommendedName>
</protein>